<evidence type="ECO:0000255" key="1">
    <source>
        <dbReference type="HAMAP-Rule" id="MF_00020"/>
    </source>
</evidence>
<evidence type="ECO:0000305" key="2"/>
<name>ACKA2_PHOPR</name>
<protein>
    <recommendedName>
        <fullName evidence="1">Acetate kinase 2</fullName>
        <ecNumber evidence="1">2.7.2.1</ecNumber>
    </recommendedName>
    <alternativeName>
        <fullName evidence="1">Acetokinase 2</fullName>
    </alternativeName>
</protein>
<accession>Q6LLD4</accession>
<organism>
    <name type="scientific">Photobacterium profundum (strain SS9)</name>
    <dbReference type="NCBI Taxonomy" id="298386"/>
    <lineage>
        <taxon>Bacteria</taxon>
        <taxon>Pseudomonadati</taxon>
        <taxon>Pseudomonadota</taxon>
        <taxon>Gammaproteobacteria</taxon>
        <taxon>Vibrionales</taxon>
        <taxon>Vibrionaceae</taxon>
        <taxon>Photobacterium</taxon>
    </lineage>
</organism>
<dbReference type="EC" id="2.7.2.1" evidence="1"/>
<dbReference type="EMBL" id="CR378675">
    <property type="protein sequence ID" value="CAG21947.1"/>
    <property type="status" value="ALT_INIT"/>
    <property type="molecule type" value="Genomic_DNA"/>
</dbReference>
<dbReference type="RefSeq" id="WP_041394858.1">
    <property type="nucleotide sequence ID" value="NC_006371.1"/>
</dbReference>
<dbReference type="SMR" id="Q6LLD4"/>
<dbReference type="STRING" id="298386.PBPRB0074"/>
<dbReference type="KEGG" id="ppr:PBPRB0074"/>
<dbReference type="eggNOG" id="COG0282">
    <property type="taxonomic scope" value="Bacteria"/>
</dbReference>
<dbReference type="HOGENOM" id="CLU_020352_0_1_6"/>
<dbReference type="UniPathway" id="UPA00340">
    <property type="reaction ID" value="UER00458"/>
</dbReference>
<dbReference type="Proteomes" id="UP000000593">
    <property type="component" value="Chromosome 2"/>
</dbReference>
<dbReference type="GO" id="GO:0005829">
    <property type="term" value="C:cytosol"/>
    <property type="evidence" value="ECO:0007669"/>
    <property type="project" value="TreeGrafter"/>
</dbReference>
<dbReference type="GO" id="GO:0008776">
    <property type="term" value="F:acetate kinase activity"/>
    <property type="evidence" value="ECO:0007669"/>
    <property type="project" value="UniProtKB-UniRule"/>
</dbReference>
<dbReference type="GO" id="GO:0005524">
    <property type="term" value="F:ATP binding"/>
    <property type="evidence" value="ECO:0007669"/>
    <property type="project" value="UniProtKB-KW"/>
</dbReference>
<dbReference type="GO" id="GO:0000287">
    <property type="term" value="F:magnesium ion binding"/>
    <property type="evidence" value="ECO:0007669"/>
    <property type="project" value="UniProtKB-UniRule"/>
</dbReference>
<dbReference type="GO" id="GO:0006083">
    <property type="term" value="P:acetate metabolic process"/>
    <property type="evidence" value="ECO:0007669"/>
    <property type="project" value="TreeGrafter"/>
</dbReference>
<dbReference type="GO" id="GO:0006085">
    <property type="term" value="P:acetyl-CoA biosynthetic process"/>
    <property type="evidence" value="ECO:0007669"/>
    <property type="project" value="UniProtKB-UniRule"/>
</dbReference>
<dbReference type="CDD" id="cd24010">
    <property type="entry name" value="ASKHA_NBD_AcK_PK"/>
    <property type="match status" value="1"/>
</dbReference>
<dbReference type="Gene3D" id="3.30.420.40">
    <property type="match status" value="2"/>
</dbReference>
<dbReference type="HAMAP" id="MF_00020">
    <property type="entry name" value="Acetate_kinase"/>
    <property type="match status" value="1"/>
</dbReference>
<dbReference type="InterPro" id="IPR004372">
    <property type="entry name" value="Ac/propionate_kinase"/>
</dbReference>
<dbReference type="InterPro" id="IPR000890">
    <property type="entry name" value="Aliphatic_acid_kin_short-chain"/>
</dbReference>
<dbReference type="InterPro" id="IPR023865">
    <property type="entry name" value="Aliphatic_acid_kinase_CS"/>
</dbReference>
<dbReference type="InterPro" id="IPR043129">
    <property type="entry name" value="ATPase_NBD"/>
</dbReference>
<dbReference type="NCBIfam" id="TIGR00016">
    <property type="entry name" value="ackA"/>
    <property type="match status" value="1"/>
</dbReference>
<dbReference type="NCBIfam" id="NF009099">
    <property type="entry name" value="PRK12440.1"/>
    <property type="match status" value="1"/>
</dbReference>
<dbReference type="PANTHER" id="PTHR21060">
    <property type="entry name" value="ACETATE KINASE"/>
    <property type="match status" value="1"/>
</dbReference>
<dbReference type="PANTHER" id="PTHR21060:SF21">
    <property type="entry name" value="ACETATE KINASE"/>
    <property type="match status" value="1"/>
</dbReference>
<dbReference type="Pfam" id="PF00871">
    <property type="entry name" value="Acetate_kinase"/>
    <property type="match status" value="1"/>
</dbReference>
<dbReference type="PIRSF" id="PIRSF000722">
    <property type="entry name" value="Acetate_prop_kin"/>
    <property type="match status" value="1"/>
</dbReference>
<dbReference type="PRINTS" id="PR00471">
    <property type="entry name" value="ACETATEKNASE"/>
</dbReference>
<dbReference type="SUPFAM" id="SSF53067">
    <property type="entry name" value="Actin-like ATPase domain"/>
    <property type="match status" value="2"/>
</dbReference>
<dbReference type="PROSITE" id="PS01075">
    <property type="entry name" value="ACETATE_KINASE_1"/>
    <property type="match status" value="1"/>
</dbReference>
<dbReference type="PROSITE" id="PS01076">
    <property type="entry name" value="ACETATE_KINASE_2"/>
    <property type="match status" value="1"/>
</dbReference>
<sequence length="397" mass="42876">MSNSLVLVINSGSSSLKFALIDTVSGEATLNGIGECFGLADANVSWKIDGKKHEFQLSDNGNHHKQAIDRIVALLEEQGIKQDIVAVGHRVVHGGEKFTQTVKIDETVLQEIENLSDLAPLHNPAHVVGMRAAIAAFPALSQYAVFDTAFHQTMPAKAFTGAISSKLYDDYGIRRYGFHGTSHYFVSREAAKVINKPIEKSSFISVHLGNGASVCAIKDGQSVDTSMGFTPLSGLMMGTRCGDLDPGIIEFLLKKGWSTEQVFKELNSNSGFLGVSGLTSDCRGVIEAMEEGHAGATLAFEIFTYRVAKYIASYMVALDELDGIIFTGGIGENSLPIRRQILKSLKIFGYREDEVANADARFGKGGVITQANTPIAMVIPTNEEWVIAKESMALLHA</sequence>
<reference key="1">
    <citation type="journal article" date="2005" name="Science">
        <title>Life at depth: Photobacterium profundum genome sequence and expression analysis.</title>
        <authorList>
            <person name="Vezzi A."/>
            <person name="Campanaro S."/>
            <person name="D'Angelo M."/>
            <person name="Simonato F."/>
            <person name="Vitulo N."/>
            <person name="Lauro F.M."/>
            <person name="Cestaro A."/>
            <person name="Malacrida G."/>
            <person name="Simionati B."/>
            <person name="Cannata N."/>
            <person name="Romualdi C."/>
            <person name="Bartlett D.H."/>
            <person name="Valle G."/>
        </authorList>
    </citation>
    <scope>NUCLEOTIDE SEQUENCE [LARGE SCALE GENOMIC DNA]</scope>
    <source>
        <strain>ATCC BAA-1253 / SS9</strain>
    </source>
</reference>
<gene>
    <name evidence="1" type="primary">ackA2</name>
    <name type="ordered locus">PBPRB0074</name>
</gene>
<proteinExistence type="inferred from homology"/>
<feature type="chain" id="PRO_0000107600" description="Acetate kinase 2">
    <location>
        <begin position="1"/>
        <end position="397"/>
    </location>
</feature>
<feature type="active site" description="Proton donor/acceptor" evidence="1">
    <location>
        <position position="147"/>
    </location>
</feature>
<feature type="binding site" evidence="1">
    <location>
        <position position="10"/>
    </location>
    <ligand>
        <name>Mg(2+)</name>
        <dbReference type="ChEBI" id="CHEBI:18420"/>
    </ligand>
</feature>
<feature type="binding site" evidence="1">
    <location>
        <position position="17"/>
    </location>
    <ligand>
        <name>ATP</name>
        <dbReference type="ChEBI" id="CHEBI:30616"/>
    </ligand>
</feature>
<feature type="binding site" evidence="1">
    <location>
        <position position="90"/>
    </location>
    <ligand>
        <name>substrate</name>
    </ligand>
</feature>
<feature type="binding site" evidence="1">
    <location>
        <begin position="207"/>
        <end position="211"/>
    </location>
    <ligand>
        <name>ATP</name>
        <dbReference type="ChEBI" id="CHEBI:30616"/>
    </ligand>
</feature>
<feature type="binding site" evidence="1">
    <location>
        <begin position="281"/>
        <end position="283"/>
    </location>
    <ligand>
        <name>ATP</name>
        <dbReference type="ChEBI" id="CHEBI:30616"/>
    </ligand>
</feature>
<feature type="binding site" evidence="1">
    <location>
        <begin position="329"/>
        <end position="333"/>
    </location>
    <ligand>
        <name>ATP</name>
        <dbReference type="ChEBI" id="CHEBI:30616"/>
    </ligand>
</feature>
<feature type="binding site" evidence="1">
    <location>
        <position position="383"/>
    </location>
    <ligand>
        <name>Mg(2+)</name>
        <dbReference type="ChEBI" id="CHEBI:18420"/>
    </ligand>
</feature>
<feature type="site" description="Transition state stabilizer" evidence="1">
    <location>
        <position position="179"/>
    </location>
</feature>
<feature type="site" description="Transition state stabilizer" evidence="1">
    <location>
        <position position="240"/>
    </location>
</feature>
<keyword id="KW-0067">ATP-binding</keyword>
<keyword id="KW-0963">Cytoplasm</keyword>
<keyword id="KW-0418">Kinase</keyword>
<keyword id="KW-0460">Magnesium</keyword>
<keyword id="KW-0479">Metal-binding</keyword>
<keyword id="KW-0547">Nucleotide-binding</keyword>
<keyword id="KW-1185">Reference proteome</keyword>
<keyword id="KW-0808">Transferase</keyword>
<comment type="function">
    <text evidence="1">Catalyzes the formation of acetyl phosphate from acetate and ATP. Can also catalyze the reverse reaction.</text>
</comment>
<comment type="catalytic activity">
    <reaction evidence="1">
        <text>acetate + ATP = acetyl phosphate + ADP</text>
        <dbReference type="Rhea" id="RHEA:11352"/>
        <dbReference type="ChEBI" id="CHEBI:22191"/>
        <dbReference type="ChEBI" id="CHEBI:30089"/>
        <dbReference type="ChEBI" id="CHEBI:30616"/>
        <dbReference type="ChEBI" id="CHEBI:456216"/>
        <dbReference type="EC" id="2.7.2.1"/>
    </reaction>
</comment>
<comment type="cofactor">
    <cofactor evidence="1">
        <name>Mg(2+)</name>
        <dbReference type="ChEBI" id="CHEBI:18420"/>
    </cofactor>
    <cofactor evidence="1">
        <name>Mn(2+)</name>
        <dbReference type="ChEBI" id="CHEBI:29035"/>
    </cofactor>
    <text evidence="1">Mg(2+). Can also accept Mn(2+).</text>
</comment>
<comment type="pathway">
    <text evidence="1">Metabolic intermediate biosynthesis; acetyl-CoA biosynthesis; acetyl-CoA from acetate: step 1/2.</text>
</comment>
<comment type="subunit">
    <text evidence="1">Homodimer.</text>
</comment>
<comment type="subcellular location">
    <subcellularLocation>
        <location evidence="1">Cytoplasm</location>
    </subcellularLocation>
</comment>
<comment type="similarity">
    <text evidence="1">Belongs to the acetokinase family.</text>
</comment>
<comment type="sequence caution" evidence="2">
    <conflict type="erroneous initiation">
        <sequence resource="EMBL-CDS" id="CAG21947"/>
    </conflict>
</comment>